<proteinExistence type="evidence at transcript level"/>
<evidence type="ECO:0000250" key="1"/>
<evidence type="ECO:0000255" key="2">
    <source>
        <dbReference type="PROSITE-ProRule" id="PRU00448"/>
    </source>
</evidence>
<evidence type="ECO:0000305" key="3"/>
<comment type="function">
    <text>Calmodulin mediates the control of a large number of enzymes, ion channels and other proteins by Ca(2+). Among the enzymes to be stimulated by the calmodulin-Ca(2+) complex are a number of protein kinases and phosphatases.</text>
</comment>
<comment type="miscellaneous">
    <text>This protein has four functional calcium-binding sites.</text>
</comment>
<comment type="similarity">
    <text evidence="3">Belongs to the calmodulin family.</text>
</comment>
<dbReference type="EMBL" id="Y13578">
    <property type="protein sequence ID" value="CAA73906.1"/>
    <property type="molecule type" value="mRNA"/>
</dbReference>
<dbReference type="EMBL" id="AB076905">
    <property type="protein sequence ID" value="BAC57528.1"/>
    <property type="molecule type" value="mRNA"/>
</dbReference>
<dbReference type="RefSeq" id="NP_001027633.1">
    <property type="nucleotide sequence ID" value="NM_001032461.1"/>
</dbReference>
<dbReference type="BMRB" id="O02367"/>
<dbReference type="SMR" id="O02367"/>
<dbReference type="FunCoup" id="O02367">
    <property type="interactions" value="181"/>
</dbReference>
<dbReference type="STRING" id="7719.ENSCINP00000017572"/>
<dbReference type="GeneID" id="445635"/>
<dbReference type="KEGG" id="cin:445635"/>
<dbReference type="CTD" id="36329"/>
<dbReference type="eggNOG" id="KOG0027">
    <property type="taxonomic scope" value="Eukaryota"/>
</dbReference>
<dbReference type="InParanoid" id="O02367"/>
<dbReference type="OrthoDB" id="26525at2759"/>
<dbReference type="Proteomes" id="UP000008144">
    <property type="component" value="Unplaced"/>
</dbReference>
<dbReference type="GO" id="GO:0005737">
    <property type="term" value="C:cytoplasm"/>
    <property type="evidence" value="ECO:0000318"/>
    <property type="project" value="GO_Central"/>
</dbReference>
<dbReference type="GO" id="GO:0005509">
    <property type="term" value="F:calcium ion binding"/>
    <property type="evidence" value="ECO:0000318"/>
    <property type="project" value="GO_Central"/>
</dbReference>
<dbReference type="GO" id="GO:0030234">
    <property type="term" value="F:enzyme regulator activity"/>
    <property type="evidence" value="ECO:0000318"/>
    <property type="project" value="GO_Central"/>
</dbReference>
<dbReference type="GO" id="GO:0000226">
    <property type="term" value="P:microtubule cytoskeleton organization"/>
    <property type="evidence" value="ECO:0000318"/>
    <property type="project" value="GO_Central"/>
</dbReference>
<dbReference type="CDD" id="cd00051">
    <property type="entry name" value="EFh"/>
    <property type="match status" value="2"/>
</dbReference>
<dbReference type="FunFam" id="1.10.238.10:FF:000527">
    <property type="entry name" value="Calmodulin-3"/>
    <property type="match status" value="1"/>
</dbReference>
<dbReference type="Gene3D" id="1.10.238.10">
    <property type="entry name" value="EF-hand"/>
    <property type="match status" value="3"/>
</dbReference>
<dbReference type="InterPro" id="IPR050230">
    <property type="entry name" value="CALM/Myosin/TropC-like"/>
</dbReference>
<dbReference type="InterPro" id="IPR011992">
    <property type="entry name" value="EF-hand-dom_pair"/>
</dbReference>
<dbReference type="InterPro" id="IPR018247">
    <property type="entry name" value="EF_Hand_1_Ca_BS"/>
</dbReference>
<dbReference type="InterPro" id="IPR002048">
    <property type="entry name" value="EF_hand_dom"/>
</dbReference>
<dbReference type="PANTHER" id="PTHR23048:SF0">
    <property type="entry name" value="CALMODULIN LIKE 3"/>
    <property type="match status" value="1"/>
</dbReference>
<dbReference type="PANTHER" id="PTHR23048">
    <property type="entry name" value="MYOSIN LIGHT CHAIN 1, 3"/>
    <property type="match status" value="1"/>
</dbReference>
<dbReference type="Pfam" id="PF13499">
    <property type="entry name" value="EF-hand_7"/>
    <property type="match status" value="2"/>
</dbReference>
<dbReference type="SMART" id="SM00054">
    <property type="entry name" value="EFh"/>
    <property type="match status" value="4"/>
</dbReference>
<dbReference type="SUPFAM" id="SSF47473">
    <property type="entry name" value="EF-hand"/>
    <property type="match status" value="1"/>
</dbReference>
<dbReference type="PROSITE" id="PS00018">
    <property type="entry name" value="EF_HAND_1"/>
    <property type="match status" value="4"/>
</dbReference>
<dbReference type="PROSITE" id="PS50222">
    <property type="entry name" value="EF_HAND_2"/>
    <property type="match status" value="4"/>
</dbReference>
<sequence length="149" mass="16837">MADQLTEEQIAEFKEAFSLFDKDGDGTITTKELGTVMRSLGQNPTEAELQDMINEVDADGNGTIDFPEFLTMMARKMKDTDSEEEIREAFRVFDKDGNGFISAAELRHVMTNLGEKLTDEEVDEMIREADVDGDGQVNYEEFVNMMTNK</sequence>
<keyword id="KW-0007">Acetylation</keyword>
<keyword id="KW-0106">Calcium</keyword>
<keyword id="KW-0479">Metal-binding</keyword>
<keyword id="KW-0488">Methylation</keyword>
<keyword id="KW-1185">Reference proteome</keyword>
<keyword id="KW-0677">Repeat</keyword>
<protein>
    <recommendedName>
        <fullName>Calmodulin</fullName>
        <shortName>CaM</shortName>
    </recommendedName>
    <alternativeName>
        <fullName>Ci-CaM</fullName>
    </alternativeName>
</protein>
<name>CALM_CIOIN</name>
<feature type="initiator methionine" description="Removed" evidence="1">
    <location>
        <position position="1"/>
    </location>
</feature>
<feature type="chain" id="PRO_0000198251" description="Calmodulin">
    <location>
        <begin position="2"/>
        <end position="149"/>
    </location>
</feature>
<feature type="domain" description="EF-hand 1" evidence="2">
    <location>
        <begin position="8"/>
        <end position="43"/>
    </location>
</feature>
<feature type="domain" description="EF-hand 2" evidence="2">
    <location>
        <begin position="44"/>
        <end position="79"/>
    </location>
</feature>
<feature type="domain" description="EF-hand 3" evidence="2">
    <location>
        <begin position="81"/>
        <end position="116"/>
    </location>
</feature>
<feature type="domain" description="EF-hand 4" evidence="2">
    <location>
        <begin position="117"/>
        <end position="149"/>
    </location>
</feature>
<feature type="binding site" evidence="2">
    <location>
        <position position="21"/>
    </location>
    <ligand>
        <name>Ca(2+)</name>
        <dbReference type="ChEBI" id="CHEBI:29108"/>
        <label>1</label>
    </ligand>
</feature>
<feature type="binding site" evidence="2">
    <location>
        <position position="23"/>
    </location>
    <ligand>
        <name>Ca(2+)</name>
        <dbReference type="ChEBI" id="CHEBI:29108"/>
        <label>1</label>
    </ligand>
</feature>
<feature type="binding site" evidence="2">
    <location>
        <position position="25"/>
    </location>
    <ligand>
        <name>Ca(2+)</name>
        <dbReference type="ChEBI" id="CHEBI:29108"/>
        <label>1</label>
    </ligand>
</feature>
<feature type="binding site" evidence="2">
    <location>
        <position position="27"/>
    </location>
    <ligand>
        <name>Ca(2+)</name>
        <dbReference type="ChEBI" id="CHEBI:29108"/>
        <label>1</label>
    </ligand>
</feature>
<feature type="binding site" evidence="2">
    <location>
        <position position="32"/>
    </location>
    <ligand>
        <name>Ca(2+)</name>
        <dbReference type="ChEBI" id="CHEBI:29108"/>
        <label>1</label>
    </ligand>
</feature>
<feature type="binding site" evidence="2">
    <location>
        <position position="57"/>
    </location>
    <ligand>
        <name>Ca(2+)</name>
        <dbReference type="ChEBI" id="CHEBI:29108"/>
        <label>2</label>
    </ligand>
</feature>
<feature type="binding site" evidence="2">
    <location>
        <position position="59"/>
    </location>
    <ligand>
        <name>Ca(2+)</name>
        <dbReference type="ChEBI" id="CHEBI:29108"/>
        <label>2</label>
    </ligand>
</feature>
<feature type="binding site" evidence="2">
    <location>
        <position position="61"/>
    </location>
    <ligand>
        <name>Ca(2+)</name>
        <dbReference type="ChEBI" id="CHEBI:29108"/>
        <label>2</label>
    </ligand>
</feature>
<feature type="binding site" evidence="2">
    <location>
        <position position="63"/>
    </location>
    <ligand>
        <name>Ca(2+)</name>
        <dbReference type="ChEBI" id="CHEBI:29108"/>
        <label>2</label>
    </ligand>
</feature>
<feature type="binding site" evidence="2">
    <location>
        <position position="68"/>
    </location>
    <ligand>
        <name>Ca(2+)</name>
        <dbReference type="ChEBI" id="CHEBI:29108"/>
        <label>2</label>
    </ligand>
</feature>
<feature type="binding site" evidence="2">
    <location>
        <position position="94"/>
    </location>
    <ligand>
        <name>Ca(2+)</name>
        <dbReference type="ChEBI" id="CHEBI:29108"/>
        <label>3</label>
    </ligand>
</feature>
<feature type="binding site" evidence="2">
    <location>
        <position position="96"/>
    </location>
    <ligand>
        <name>Ca(2+)</name>
        <dbReference type="ChEBI" id="CHEBI:29108"/>
        <label>3</label>
    </ligand>
</feature>
<feature type="binding site" evidence="2">
    <location>
        <position position="98"/>
    </location>
    <ligand>
        <name>Ca(2+)</name>
        <dbReference type="ChEBI" id="CHEBI:29108"/>
        <label>3</label>
    </ligand>
</feature>
<feature type="binding site" evidence="2">
    <location>
        <position position="105"/>
    </location>
    <ligand>
        <name>Ca(2+)</name>
        <dbReference type="ChEBI" id="CHEBI:29108"/>
        <label>3</label>
    </ligand>
</feature>
<feature type="binding site" evidence="2">
    <location>
        <position position="130"/>
    </location>
    <ligand>
        <name>Ca(2+)</name>
        <dbReference type="ChEBI" id="CHEBI:29108"/>
        <label>4</label>
    </ligand>
</feature>
<feature type="binding site" evidence="2">
    <location>
        <position position="132"/>
    </location>
    <ligand>
        <name>Ca(2+)</name>
        <dbReference type="ChEBI" id="CHEBI:29108"/>
        <label>4</label>
    </ligand>
</feature>
<feature type="binding site" evidence="2">
    <location>
        <position position="134"/>
    </location>
    <ligand>
        <name>Ca(2+)</name>
        <dbReference type="ChEBI" id="CHEBI:29108"/>
        <label>4</label>
    </ligand>
</feature>
<feature type="binding site" evidence="2">
    <location>
        <position position="136"/>
    </location>
    <ligand>
        <name>Ca(2+)</name>
        <dbReference type="ChEBI" id="CHEBI:29108"/>
        <label>4</label>
    </ligand>
</feature>
<feature type="binding site" evidence="2">
    <location>
        <position position="141"/>
    </location>
    <ligand>
        <name>Ca(2+)</name>
        <dbReference type="ChEBI" id="CHEBI:29108"/>
        <label>4</label>
    </ligand>
</feature>
<feature type="modified residue" description="N-acetylalanine" evidence="1">
    <location>
        <position position="2"/>
    </location>
</feature>
<feature type="modified residue" description="N6,N6,N6-trimethyllysine" evidence="1">
    <location>
        <position position="116"/>
    </location>
</feature>
<accession>O02367</accession>
<reference key="1">
    <citation type="journal article" date="1998" name="Dev. Growth Differ.">
        <title>Developmental regulation and tissue-specific localization of calmodulin mRNA in the protochordate Ciona intestinalis.</title>
        <authorList>
            <person name="Di Gregorio A."/>
            <person name="Villani M.G."/>
            <person name="Locascio A."/>
            <person name="Ristoratore F."/>
            <person name="Aniello F."/>
            <person name="Branno M."/>
        </authorList>
    </citation>
    <scope>NUCLEOTIDE SEQUENCE [MRNA]</scope>
</reference>
<reference key="2">
    <citation type="submission" date="2001-12" db="EMBL/GenBank/DDBJ databases">
        <title>Further characterization of brachyury-downstream genes in Ciona intestinalis embryo.</title>
        <authorList>
            <person name="Hotta K."/>
            <person name="Takahashi H."/>
            <person name="Satoh N."/>
        </authorList>
    </citation>
    <scope>NUCLEOTIDE SEQUENCE [MRNA]</scope>
</reference>
<organism>
    <name type="scientific">Ciona intestinalis</name>
    <name type="common">Transparent sea squirt</name>
    <name type="synonym">Ascidia intestinalis</name>
    <dbReference type="NCBI Taxonomy" id="7719"/>
    <lineage>
        <taxon>Eukaryota</taxon>
        <taxon>Metazoa</taxon>
        <taxon>Chordata</taxon>
        <taxon>Tunicata</taxon>
        <taxon>Ascidiacea</taxon>
        <taxon>Phlebobranchia</taxon>
        <taxon>Cionidae</taxon>
        <taxon>Ciona</taxon>
    </lineage>
</organism>